<proteinExistence type="inferred from homology"/>
<dbReference type="EMBL" id="CH981525">
    <property type="protein sequence ID" value="EDK43897.1"/>
    <property type="molecule type" value="Genomic_DNA"/>
</dbReference>
<dbReference type="RefSeq" id="XP_001527247.1">
    <property type="nucleotide sequence ID" value="XM_001527197.1"/>
</dbReference>
<dbReference type="FunCoup" id="A5DXI9">
    <property type="interactions" value="104"/>
</dbReference>
<dbReference type="STRING" id="379508.A5DXI9"/>
<dbReference type="GeneID" id="5234602"/>
<dbReference type="KEGG" id="lel:PVL30_002049"/>
<dbReference type="VEuPathDB" id="FungiDB:LELG_02076"/>
<dbReference type="eggNOG" id="KOG0998">
    <property type="taxonomic scope" value="Eukaryota"/>
</dbReference>
<dbReference type="HOGENOM" id="CLU_040829_0_0_1"/>
<dbReference type="InParanoid" id="A5DXI9"/>
<dbReference type="OMA" id="DWLIPES"/>
<dbReference type="OrthoDB" id="1716625at2759"/>
<dbReference type="Proteomes" id="UP000001996">
    <property type="component" value="Unassembled WGS sequence"/>
</dbReference>
<dbReference type="GO" id="GO:0030479">
    <property type="term" value="C:actin cortical patch"/>
    <property type="evidence" value="ECO:0007669"/>
    <property type="project" value="UniProtKB-SubCell"/>
</dbReference>
<dbReference type="GO" id="GO:1990964">
    <property type="term" value="C:actin cytoskeleton-regulatory complex"/>
    <property type="evidence" value="ECO:0007669"/>
    <property type="project" value="EnsemblFungi"/>
</dbReference>
<dbReference type="GO" id="GO:0010008">
    <property type="term" value="C:endosome membrane"/>
    <property type="evidence" value="ECO:0007669"/>
    <property type="project" value="UniProtKB-SubCell"/>
</dbReference>
<dbReference type="GO" id="GO:0005886">
    <property type="term" value="C:plasma membrane"/>
    <property type="evidence" value="ECO:0007669"/>
    <property type="project" value="UniProtKB-SubCell"/>
</dbReference>
<dbReference type="GO" id="GO:0003779">
    <property type="term" value="F:actin binding"/>
    <property type="evidence" value="ECO:0007669"/>
    <property type="project" value="UniProtKB-KW"/>
</dbReference>
<dbReference type="GO" id="GO:0005509">
    <property type="term" value="F:calcium ion binding"/>
    <property type="evidence" value="ECO:0007669"/>
    <property type="project" value="InterPro"/>
</dbReference>
<dbReference type="GO" id="GO:0030674">
    <property type="term" value="F:protein-macromolecule adaptor activity"/>
    <property type="evidence" value="ECO:0007669"/>
    <property type="project" value="EnsemblFungi"/>
</dbReference>
<dbReference type="GO" id="GO:0007015">
    <property type="term" value="P:actin filament organization"/>
    <property type="evidence" value="ECO:0007669"/>
    <property type="project" value="InterPro"/>
</dbReference>
<dbReference type="GO" id="GO:0030476">
    <property type="term" value="P:ascospore wall assembly"/>
    <property type="evidence" value="ECO:0007669"/>
    <property type="project" value="EnsemblFungi"/>
</dbReference>
<dbReference type="GO" id="GO:0006897">
    <property type="term" value="P:endocytosis"/>
    <property type="evidence" value="ECO:0007669"/>
    <property type="project" value="UniProtKB-KW"/>
</dbReference>
<dbReference type="GO" id="GO:0016197">
    <property type="term" value="P:endosomal transport"/>
    <property type="evidence" value="ECO:0007669"/>
    <property type="project" value="TreeGrafter"/>
</dbReference>
<dbReference type="GO" id="GO:0061709">
    <property type="term" value="P:reticulophagy"/>
    <property type="evidence" value="ECO:0007669"/>
    <property type="project" value="EnsemblFungi"/>
</dbReference>
<dbReference type="CDD" id="cd00052">
    <property type="entry name" value="EH"/>
    <property type="match status" value="1"/>
</dbReference>
<dbReference type="Gene3D" id="1.10.238.10">
    <property type="entry name" value="EF-hand"/>
    <property type="match status" value="2"/>
</dbReference>
<dbReference type="InterPro" id="IPR011992">
    <property type="entry name" value="EF-hand-dom_pair"/>
</dbReference>
<dbReference type="InterPro" id="IPR018247">
    <property type="entry name" value="EF_Hand_1_Ca_BS"/>
</dbReference>
<dbReference type="InterPro" id="IPR002048">
    <property type="entry name" value="EF_hand_dom"/>
</dbReference>
<dbReference type="InterPro" id="IPR000261">
    <property type="entry name" value="EH_dom"/>
</dbReference>
<dbReference type="InterPro" id="IPR025604">
    <property type="entry name" value="End3"/>
</dbReference>
<dbReference type="PANTHER" id="PTHR11216">
    <property type="entry name" value="EH DOMAIN"/>
    <property type="match status" value="1"/>
</dbReference>
<dbReference type="Pfam" id="PF12763">
    <property type="entry name" value="EH"/>
    <property type="match status" value="1"/>
</dbReference>
<dbReference type="Pfam" id="PF12761">
    <property type="entry name" value="End3"/>
    <property type="match status" value="1"/>
</dbReference>
<dbReference type="SMART" id="SM00054">
    <property type="entry name" value="EFh"/>
    <property type="match status" value="1"/>
</dbReference>
<dbReference type="SMART" id="SM00027">
    <property type="entry name" value="EH"/>
    <property type="match status" value="2"/>
</dbReference>
<dbReference type="SUPFAM" id="SSF47473">
    <property type="entry name" value="EF-hand"/>
    <property type="match status" value="2"/>
</dbReference>
<dbReference type="PROSITE" id="PS00018">
    <property type="entry name" value="EF_HAND_1"/>
    <property type="match status" value="1"/>
</dbReference>
<dbReference type="PROSITE" id="PS50222">
    <property type="entry name" value="EF_HAND_2"/>
    <property type="match status" value="1"/>
</dbReference>
<dbReference type="PROSITE" id="PS50031">
    <property type="entry name" value="EH"/>
    <property type="match status" value="2"/>
</dbReference>
<protein>
    <recommendedName>
        <fullName>Actin cytoskeleton-regulatory complex protein END3</fullName>
    </recommendedName>
    <alternativeName>
        <fullName>Endocytosis protein 3</fullName>
    </alternativeName>
</protein>
<organism>
    <name type="scientific">Lodderomyces elongisporus (strain ATCC 11503 / CBS 2605 / JCM 1781 / NBRC 1676 / NRRL YB-4239)</name>
    <name type="common">Yeast</name>
    <name type="synonym">Saccharomyces elongisporus</name>
    <dbReference type="NCBI Taxonomy" id="379508"/>
    <lineage>
        <taxon>Eukaryota</taxon>
        <taxon>Fungi</taxon>
        <taxon>Dikarya</taxon>
        <taxon>Ascomycota</taxon>
        <taxon>Saccharomycotina</taxon>
        <taxon>Pichiomycetes</taxon>
        <taxon>Debaryomycetaceae</taxon>
        <taxon>Candida/Lodderomyces clade</taxon>
        <taxon>Lodderomyces</taxon>
    </lineage>
</organism>
<name>END3_LODEL</name>
<gene>
    <name type="primary">END3</name>
    <name type="ORF">LELG_02076</name>
</gene>
<keyword id="KW-0009">Actin-binding</keyword>
<keyword id="KW-0106">Calcium</keyword>
<keyword id="KW-1003">Cell membrane</keyword>
<keyword id="KW-0175">Coiled coil</keyword>
<keyword id="KW-0963">Cytoplasm</keyword>
<keyword id="KW-0206">Cytoskeleton</keyword>
<keyword id="KW-0254">Endocytosis</keyword>
<keyword id="KW-0967">Endosome</keyword>
<keyword id="KW-0472">Membrane</keyword>
<keyword id="KW-0479">Metal-binding</keyword>
<keyword id="KW-1185">Reference proteome</keyword>
<keyword id="KW-0677">Repeat</keyword>
<evidence type="ECO:0000250" key="1"/>
<evidence type="ECO:0000255" key="2"/>
<evidence type="ECO:0000255" key="3">
    <source>
        <dbReference type="PROSITE-ProRule" id="PRU00077"/>
    </source>
</evidence>
<evidence type="ECO:0000255" key="4">
    <source>
        <dbReference type="PROSITE-ProRule" id="PRU00448"/>
    </source>
</evidence>
<evidence type="ECO:0000256" key="5">
    <source>
        <dbReference type="SAM" id="MobiDB-lite"/>
    </source>
</evidence>
<evidence type="ECO:0000305" key="6"/>
<sequence length="362" mass="41693">MPRLEESEIKKYWQIFQGLKPENNKVSGEQVSPVLKNSRLPQQQLASVWTLSDIDNDGKLDFEEFCITMRLIFDLINGSISEVPLQLPLWLIPSSKAALIQANQAVNLGRNLGIDYDDDDDGLTDDFDWYISPADKSTYETIYQLKNDRFGRIRFDSLESLYATLRNVPKSEISSAWNLVNPKSFETIDKDQTIVFLHILNQRENGKRIPRGVPASLRATFSKEIPNYNLDAQVKPQHTTQTQASKRSFAEDYLTKLGHNGKSLFSLLAPLSSGNDRGTDFSATQGTDWEEVRLRRELTDLENLLEKIQNRSDKDKKDDEEQRMVKYEFEQLLKYKQEQYDRQQREREVEGSGGSGLKQVEK</sequence>
<feature type="chain" id="PRO_0000349450" description="Actin cytoskeleton-regulatory complex protein END3">
    <location>
        <begin position="1"/>
        <end position="362"/>
    </location>
</feature>
<feature type="domain" description="EH 1" evidence="3">
    <location>
        <begin position="8"/>
        <end position="98"/>
    </location>
</feature>
<feature type="domain" description="EF-hand" evidence="4">
    <location>
        <begin position="40"/>
        <end position="75"/>
    </location>
</feature>
<feature type="domain" description="EH 2" evidence="3">
    <location>
        <begin position="135"/>
        <end position="224"/>
    </location>
</feature>
<feature type="region of interest" description="Disordered" evidence="5">
    <location>
        <begin position="339"/>
        <end position="362"/>
    </location>
</feature>
<feature type="coiled-coil region" evidence="2">
    <location>
        <begin position="287"/>
        <end position="348"/>
    </location>
</feature>
<feature type="compositionally biased region" description="Basic and acidic residues" evidence="5">
    <location>
        <begin position="339"/>
        <end position="350"/>
    </location>
</feature>
<feature type="binding site" evidence="4">
    <location>
        <position position="53"/>
    </location>
    <ligand>
        <name>Ca(2+)</name>
        <dbReference type="ChEBI" id="CHEBI:29108"/>
    </ligand>
</feature>
<feature type="binding site" evidence="4">
    <location>
        <position position="55"/>
    </location>
    <ligand>
        <name>Ca(2+)</name>
        <dbReference type="ChEBI" id="CHEBI:29108"/>
    </ligand>
</feature>
<feature type="binding site" evidence="4">
    <location>
        <position position="57"/>
    </location>
    <ligand>
        <name>Ca(2+)</name>
        <dbReference type="ChEBI" id="CHEBI:29108"/>
    </ligand>
</feature>
<feature type="binding site" evidence="4">
    <location>
        <position position="59"/>
    </location>
    <ligand>
        <name>Ca(2+)</name>
        <dbReference type="ChEBI" id="CHEBI:29108"/>
    </ligand>
</feature>
<feature type="binding site" evidence="4">
    <location>
        <position position="64"/>
    </location>
    <ligand>
        <name>Ca(2+)</name>
        <dbReference type="ChEBI" id="CHEBI:29108"/>
    </ligand>
</feature>
<reference key="1">
    <citation type="journal article" date="2009" name="Nature">
        <title>Evolution of pathogenicity and sexual reproduction in eight Candida genomes.</title>
        <authorList>
            <person name="Butler G."/>
            <person name="Rasmussen M.D."/>
            <person name="Lin M.F."/>
            <person name="Santos M.A.S."/>
            <person name="Sakthikumar S."/>
            <person name="Munro C.A."/>
            <person name="Rheinbay E."/>
            <person name="Grabherr M."/>
            <person name="Forche A."/>
            <person name="Reedy J.L."/>
            <person name="Agrafioti I."/>
            <person name="Arnaud M.B."/>
            <person name="Bates S."/>
            <person name="Brown A.J.P."/>
            <person name="Brunke S."/>
            <person name="Costanzo M.C."/>
            <person name="Fitzpatrick D.A."/>
            <person name="de Groot P.W.J."/>
            <person name="Harris D."/>
            <person name="Hoyer L.L."/>
            <person name="Hube B."/>
            <person name="Klis F.M."/>
            <person name="Kodira C."/>
            <person name="Lennard N."/>
            <person name="Logue M.E."/>
            <person name="Martin R."/>
            <person name="Neiman A.M."/>
            <person name="Nikolaou E."/>
            <person name="Quail M.A."/>
            <person name="Quinn J."/>
            <person name="Santos M.C."/>
            <person name="Schmitzberger F.F."/>
            <person name="Sherlock G."/>
            <person name="Shah P."/>
            <person name="Silverstein K.A.T."/>
            <person name="Skrzypek M.S."/>
            <person name="Soll D."/>
            <person name="Staggs R."/>
            <person name="Stansfield I."/>
            <person name="Stumpf M.P.H."/>
            <person name="Sudbery P.E."/>
            <person name="Srikantha T."/>
            <person name="Zeng Q."/>
            <person name="Berman J."/>
            <person name="Berriman M."/>
            <person name="Heitman J."/>
            <person name="Gow N.A.R."/>
            <person name="Lorenz M.C."/>
            <person name="Birren B.W."/>
            <person name="Kellis M."/>
            <person name="Cuomo C.A."/>
        </authorList>
    </citation>
    <scope>NUCLEOTIDE SEQUENCE [LARGE SCALE GENOMIC DNA]</scope>
    <source>
        <strain>ATCC 11503 / BCRC 21390 / CBS 2605 / JCM 1781 / NBRC 1676 / NRRL YB-4239</strain>
    </source>
</reference>
<accession>A5DXI9</accession>
<comment type="function">
    <text evidence="1">Component of the PAN1 actin cytoskeleton-regulatory complex required for the internalization of endosomes during actin-coupled endocytosis. The complex links the site of endocytosis to the cell membrane-associated actin cytoskeleton. Mediates uptake of external molecules and vacuolar degradation of plasma membrane proteins. Plays a role in the proper organization of the cell membrane-associated actin cytoskeleton and promotes its destabilization (By similarity).</text>
</comment>
<comment type="subunit">
    <text evidence="1">Component of the PAN1 actin cytoskeleton-regulatory complex.</text>
</comment>
<comment type="subcellular location">
    <subcellularLocation>
        <location evidence="1">Cell membrane</location>
        <topology evidence="1">Peripheral membrane protein</topology>
        <orientation evidence="1">Cytoplasmic side</orientation>
    </subcellularLocation>
    <subcellularLocation>
        <location evidence="1">Endosome membrane</location>
        <topology evidence="1">Peripheral membrane protein</topology>
        <orientation evidence="1">Cytoplasmic side</orientation>
    </subcellularLocation>
    <subcellularLocation>
        <location evidence="1">Cytoplasm</location>
        <location evidence="1">Cytoskeleton</location>
        <location evidence="1">Actin patch</location>
    </subcellularLocation>
    <text evidence="1">Cytoplasmic and cortical actin patches.</text>
</comment>
<comment type="similarity">
    <text evidence="6">Belongs to the END3 family.</text>
</comment>